<organism>
    <name type="scientific">Methanococcus maripaludis (strain C5 / ATCC BAA-1333)</name>
    <dbReference type="NCBI Taxonomy" id="402880"/>
    <lineage>
        <taxon>Archaea</taxon>
        <taxon>Methanobacteriati</taxon>
        <taxon>Methanobacteriota</taxon>
        <taxon>Methanomada group</taxon>
        <taxon>Methanococci</taxon>
        <taxon>Methanococcales</taxon>
        <taxon>Methanococcaceae</taxon>
        <taxon>Methanococcus</taxon>
    </lineage>
</organism>
<reference key="1">
    <citation type="submission" date="2007-03" db="EMBL/GenBank/DDBJ databases">
        <title>Complete sequence of chromosome of Methanococcus maripaludis C5.</title>
        <authorList>
            <consortium name="US DOE Joint Genome Institute"/>
            <person name="Copeland A."/>
            <person name="Lucas S."/>
            <person name="Lapidus A."/>
            <person name="Barry K."/>
            <person name="Glavina del Rio T."/>
            <person name="Dalin E."/>
            <person name="Tice H."/>
            <person name="Pitluck S."/>
            <person name="Chertkov O."/>
            <person name="Brettin T."/>
            <person name="Bruce D."/>
            <person name="Han C."/>
            <person name="Detter J.C."/>
            <person name="Schmutz J."/>
            <person name="Larimer F."/>
            <person name="Land M."/>
            <person name="Hauser L."/>
            <person name="Kyrpides N."/>
            <person name="Mikhailova N."/>
            <person name="Sieprawska-Lupa M."/>
            <person name="Whitman W.B."/>
            <person name="Richardson P."/>
        </authorList>
    </citation>
    <scope>NUCLEOTIDE SEQUENCE [LARGE SCALE GENOMIC DNA]</scope>
    <source>
        <strain>C5 / ATCC BAA-1333</strain>
    </source>
</reference>
<sequence>MAAIEVGRVCIKTLGREAGNTCVIVEVLDKNFVVIDGSVKRRRCNLKHFEPTDKKVDLEKAASTEEVKLALDAAGLL</sequence>
<name>RL14E_METM5</name>
<accession>A4FYK2</accession>
<evidence type="ECO:0000255" key="1">
    <source>
        <dbReference type="HAMAP-Rule" id="MF_00721"/>
    </source>
</evidence>
<evidence type="ECO:0000305" key="2"/>
<dbReference type="EMBL" id="CP000609">
    <property type="protein sequence ID" value="ABO35286.1"/>
    <property type="molecule type" value="Genomic_DNA"/>
</dbReference>
<dbReference type="RefSeq" id="WP_011868739.1">
    <property type="nucleotide sequence ID" value="NC_009135.1"/>
</dbReference>
<dbReference type="SMR" id="A4FYK2"/>
<dbReference type="STRING" id="402880.MmarC5_0980"/>
<dbReference type="GeneID" id="4928636"/>
<dbReference type="KEGG" id="mmq:MmarC5_0980"/>
<dbReference type="eggNOG" id="arCOG04167">
    <property type="taxonomic scope" value="Archaea"/>
</dbReference>
<dbReference type="HOGENOM" id="CLU_183474_0_0_2"/>
<dbReference type="OrthoDB" id="63594at2157"/>
<dbReference type="Proteomes" id="UP000000253">
    <property type="component" value="Chromosome"/>
</dbReference>
<dbReference type="GO" id="GO:0022625">
    <property type="term" value="C:cytosolic large ribosomal subunit"/>
    <property type="evidence" value="ECO:0007669"/>
    <property type="project" value="TreeGrafter"/>
</dbReference>
<dbReference type="GO" id="GO:0003723">
    <property type="term" value="F:RNA binding"/>
    <property type="evidence" value="ECO:0007669"/>
    <property type="project" value="InterPro"/>
</dbReference>
<dbReference type="GO" id="GO:0003735">
    <property type="term" value="F:structural constituent of ribosome"/>
    <property type="evidence" value="ECO:0007669"/>
    <property type="project" value="InterPro"/>
</dbReference>
<dbReference type="GO" id="GO:0042273">
    <property type="term" value="P:ribosomal large subunit biogenesis"/>
    <property type="evidence" value="ECO:0007669"/>
    <property type="project" value="TreeGrafter"/>
</dbReference>
<dbReference type="GO" id="GO:0006412">
    <property type="term" value="P:translation"/>
    <property type="evidence" value="ECO:0007669"/>
    <property type="project" value="UniProtKB-UniRule"/>
</dbReference>
<dbReference type="CDD" id="cd23702">
    <property type="entry name" value="eL14"/>
    <property type="match status" value="1"/>
</dbReference>
<dbReference type="Gene3D" id="2.30.30.30">
    <property type="match status" value="1"/>
</dbReference>
<dbReference type="HAMAP" id="MF_00721">
    <property type="entry name" value="Ribosomal_eL14"/>
    <property type="match status" value="1"/>
</dbReference>
<dbReference type="InterPro" id="IPR005824">
    <property type="entry name" value="KOW"/>
</dbReference>
<dbReference type="InterPro" id="IPR014722">
    <property type="entry name" value="Rib_uL2_dom2"/>
</dbReference>
<dbReference type="InterPro" id="IPR039660">
    <property type="entry name" value="Ribosomal_eL14"/>
</dbReference>
<dbReference type="InterPro" id="IPR023651">
    <property type="entry name" value="Ribosomal_eL14_arc"/>
</dbReference>
<dbReference type="InterPro" id="IPR008991">
    <property type="entry name" value="Translation_prot_SH3-like_sf"/>
</dbReference>
<dbReference type="NCBIfam" id="NF003320">
    <property type="entry name" value="PRK04333.1"/>
    <property type="match status" value="1"/>
</dbReference>
<dbReference type="PANTHER" id="PTHR11127">
    <property type="entry name" value="60S RIBOSOMAL PROTEIN L14"/>
    <property type="match status" value="1"/>
</dbReference>
<dbReference type="PANTHER" id="PTHR11127:SF2">
    <property type="entry name" value="LARGE RIBOSOMAL SUBUNIT PROTEIN EL14"/>
    <property type="match status" value="1"/>
</dbReference>
<dbReference type="Pfam" id="PF00467">
    <property type="entry name" value="KOW"/>
    <property type="match status" value="1"/>
</dbReference>
<dbReference type="SUPFAM" id="SSF50104">
    <property type="entry name" value="Translation proteins SH3-like domain"/>
    <property type="match status" value="1"/>
</dbReference>
<feature type="chain" id="PRO_1000045819" description="Large ribosomal subunit protein eL14">
    <location>
        <begin position="1"/>
        <end position="77"/>
    </location>
</feature>
<keyword id="KW-0687">Ribonucleoprotein</keyword>
<keyword id="KW-0689">Ribosomal protein</keyword>
<comment type="similarity">
    <text evidence="1">Belongs to the eukaryotic ribosomal protein eL14 family.</text>
</comment>
<protein>
    <recommendedName>
        <fullName evidence="1">Large ribosomal subunit protein eL14</fullName>
    </recommendedName>
    <alternativeName>
        <fullName evidence="2">50S ribosomal protein L14e</fullName>
    </alternativeName>
</protein>
<gene>
    <name evidence="1" type="primary">rpl14e</name>
    <name type="ordered locus">MmarC5_0980</name>
</gene>
<proteinExistence type="inferred from homology"/>